<feature type="signal peptide" evidence="7">
    <location>
        <begin position="1"/>
        <end position="23"/>
    </location>
</feature>
<feature type="chain" id="PRO_0000013241" description="Indian hedgehog B protein">
    <location>
        <begin position="24"/>
        <end position="412"/>
    </location>
</feature>
<feature type="chain" id="PRO_0000013242" description="Indian hedgehog B protein N-product">
    <location>
        <begin position="24"/>
        <end position="197"/>
    </location>
</feature>
<feature type="binding site" evidence="3">
    <location>
        <position position="89"/>
    </location>
    <ligand>
        <name>Ca(2+)</name>
        <dbReference type="ChEBI" id="CHEBI:29108"/>
        <label>1</label>
    </ligand>
</feature>
<feature type="binding site" evidence="3">
    <location>
        <position position="90"/>
    </location>
    <ligand>
        <name>Ca(2+)</name>
        <dbReference type="ChEBI" id="CHEBI:29108"/>
        <label>1</label>
    </ligand>
</feature>
<feature type="binding site" evidence="3">
    <location>
        <position position="90"/>
    </location>
    <ligand>
        <name>Ca(2+)</name>
        <dbReference type="ChEBI" id="CHEBI:29108"/>
        <label>2</label>
    </ligand>
</feature>
<feature type="binding site" evidence="3">
    <location>
        <position position="95"/>
    </location>
    <ligand>
        <name>Ca(2+)</name>
        <dbReference type="ChEBI" id="CHEBI:29108"/>
        <label>1</label>
    </ligand>
</feature>
<feature type="binding site" evidence="3">
    <location>
        <position position="125"/>
    </location>
    <ligand>
        <name>Ca(2+)</name>
        <dbReference type="ChEBI" id="CHEBI:29108"/>
        <label>1</label>
    </ligand>
</feature>
<feature type="binding site" evidence="3">
    <location>
        <position position="126"/>
    </location>
    <ligand>
        <name>Ca(2+)</name>
        <dbReference type="ChEBI" id="CHEBI:29108"/>
        <label>1</label>
    </ligand>
</feature>
<feature type="binding site" evidence="3">
    <location>
        <position position="126"/>
    </location>
    <ligand>
        <name>Ca(2+)</name>
        <dbReference type="ChEBI" id="CHEBI:29108"/>
        <label>2</label>
    </ligand>
</feature>
<feature type="binding site" evidence="3">
    <location>
        <position position="129"/>
    </location>
    <ligand>
        <name>Ca(2+)</name>
        <dbReference type="ChEBI" id="CHEBI:29108"/>
        <label>2</label>
    </ligand>
</feature>
<feature type="binding site" evidence="3">
    <location>
        <position position="131"/>
    </location>
    <ligand>
        <name>Ca(2+)</name>
        <dbReference type="ChEBI" id="CHEBI:29108"/>
        <label>2</label>
    </ligand>
</feature>
<feature type="binding site" evidence="3">
    <location>
        <position position="140"/>
    </location>
    <ligand>
        <name>Zn(2+)</name>
        <dbReference type="ChEBI" id="CHEBI:29105"/>
    </ligand>
</feature>
<feature type="binding site" evidence="3">
    <location>
        <position position="147"/>
    </location>
    <ligand>
        <name>Zn(2+)</name>
        <dbReference type="ChEBI" id="CHEBI:29105"/>
    </ligand>
</feature>
<feature type="binding site" evidence="3">
    <location>
        <position position="182"/>
    </location>
    <ligand>
        <name>Zn(2+)</name>
        <dbReference type="ChEBI" id="CHEBI:29105"/>
    </ligand>
</feature>
<feature type="site" description="Cleavage; by autolysis" evidence="2">
    <location>
        <begin position="197"/>
        <end position="198"/>
    </location>
</feature>
<feature type="site" description="Involved in cholesterol transfer" evidence="2">
    <location>
        <position position="246"/>
    </location>
</feature>
<feature type="site" description="Involved in auto-cleavage" evidence="2">
    <location>
        <position position="269"/>
    </location>
</feature>
<feature type="site" description="Essential for auto-cleavage" evidence="2">
    <location>
        <position position="272"/>
    </location>
</feature>
<feature type="lipid moiety-binding region" description="N-palmitoyl cysteine" evidence="3">
    <location>
        <position position="24"/>
    </location>
</feature>
<feature type="lipid moiety-binding region" description="Cholesterol glycine ester" evidence="2">
    <location>
        <position position="197"/>
    </location>
</feature>
<feature type="sequence conflict" description="In Ref. 2." evidence="10" ref="2">
    <original>R</original>
    <variation>K</variation>
    <location>
        <position position="121"/>
    </location>
</feature>
<reference key="1">
    <citation type="journal article" date="1996" name="Nature">
        <title>Induction of a specific muscle cell type by a hedgehog-like protein in zebrafish.</title>
        <authorList>
            <person name="Currie P.D."/>
            <person name="Ingham P.W."/>
        </authorList>
    </citation>
    <scope>NUCLEOTIDE SEQUENCE [MRNA]</scope>
    <scope>FUNCTION</scope>
    <scope>TISSUE SPECIFICITY</scope>
    <scope>DEVELOPMENTAL STAGE</scope>
</reference>
<reference key="2">
    <citation type="journal article" date="1996" name="Proc. Natl. Acad. Sci. U.S.A.">
        <title>Evolutionary analyses of hedgehog and Hoxd-10 genes in fish species closely related to the zebrafish.</title>
        <authorList>
            <person name="Zardoya R."/>
            <person name="Abouheif E."/>
            <person name="Meyer A."/>
        </authorList>
    </citation>
    <scope>NUCLEOTIDE SEQUENCE [MRNA] OF 113-170</scope>
    <source>
        <tissue>Muscle</tissue>
    </source>
</reference>
<sequence>MRLSTAAALLTGFILAFSPAYDGCGPGRGYGKRRTPRKLTPLAYKQFSPNVAEKTLGASGRYEGKVTPSSERFKELTPNYNPDIIFKDEENTGADRMMTQRCKDKLNSLAISVMNLWPGVRLRVTEGWDEDGLHSEESLHYEGRAVDITTSDRDRNKYRMLARLAVEAGFDWVYYESKGHVHCSVKSEHSVAAKTGGCFPGRALVTMKDGSHRQIRDLQAGDLVLASEGSDGTGDLIYSEVLTFLDRRPITQKHFYVIRTEDGASVSLTAAHLLFMRVGNCSNRGEPKPGAVRTIFASDAQVGQCLLLGKLRKRFSQITHVGVREDQGLYPPLTAHGTVVVNDVLTSCYAAVNRQRLAHWAFAPLRLLYSWTGPDQVLKNGLHWYSQVLIGLGKLLLDSELFHPLALEATER</sequence>
<gene>
    <name type="primary">ihhb</name>
    <name type="synonym">ehh</name>
    <name type="synonym">ihh</name>
</gene>
<protein>
    <recommendedName>
        <fullName>Indian hedgehog B protein</fullName>
        <shortName>IHHB</shortName>
        <ecNumber evidence="5">3.1.-.-</ecNumber>
    </recommendedName>
    <alternativeName>
        <fullName evidence="9">Echidna hedgehog protein</fullName>
        <shortName>EHH</shortName>
    </alternativeName>
    <component>
        <recommendedName>
            <fullName>Indian hedgehog B protein N-product</fullName>
        </recommendedName>
    </component>
</protein>
<organism>
    <name type="scientific">Danio rerio</name>
    <name type="common">Zebrafish</name>
    <name type="synonym">Brachydanio rerio</name>
    <dbReference type="NCBI Taxonomy" id="7955"/>
    <lineage>
        <taxon>Eukaryota</taxon>
        <taxon>Metazoa</taxon>
        <taxon>Chordata</taxon>
        <taxon>Craniata</taxon>
        <taxon>Vertebrata</taxon>
        <taxon>Euteleostomi</taxon>
        <taxon>Actinopterygii</taxon>
        <taxon>Neopterygii</taxon>
        <taxon>Teleostei</taxon>
        <taxon>Ostariophysi</taxon>
        <taxon>Cypriniformes</taxon>
        <taxon>Danionidae</taxon>
        <taxon>Danioninae</taxon>
        <taxon>Danio</taxon>
    </lineage>
</organism>
<comment type="function">
    <text evidence="1 6">Signal involved in the early induction and patterning of anterodorsal ectoderm, nervous system and somites (By similarity). It is involved in the regulation of endochondral skeleton formation, and the development of retinal pigment epithelium (RPE), photoreceptors and periocular tissues (By similarity).</text>
</comment>
<comment type="function">
    <molecule>Indian hedgehog B protein</molecule>
    <text evidence="5">The C-terminal part of the indian hedgehog protein precursor displays an autoproteolysis and a cholesterol transferase activity (By similarity). Both activities result in the cleavage of the full-length protein into two parts followed by the covalent attachment of a cholesterol moiety to the C-terminal of the newly generated N-product (By similarity). Both activities occur in the endoplasmic reticulum (By similarity).</text>
</comment>
<comment type="function">
    <molecule>Indian hedgehog B protein</molecule>
    <text evidence="4 5 8">The dually lipidated indian hedgehog protein N-product is a morphogen which is essential for a variety of patterning events during development. Binds to the patched (PTCH1) receptor, which functions in association with smoothened (SMO), to activate the transcription of target genes (By similarity). In the notochord, induces somite patterning and muscle pioneer differentiation (PubMed:8684485).</text>
</comment>
<comment type="catalytic activity">
    <molecule>Indian hedgehog B protein</molecule>
    <reaction evidence="5">
        <text>glycyl-L-cysteinyl-[protein] + cholesterol + H(+) = [protein]-C-terminal glycyl cholesterol ester + N-terminal L-cysteinyl-[protein]</text>
        <dbReference type="Rhea" id="RHEA:59504"/>
        <dbReference type="Rhea" id="RHEA-COMP:12707"/>
        <dbReference type="Rhea" id="RHEA-COMP:15369"/>
        <dbReference type="Rhea" id="RHEA-COMP:15374"/>
        <dbReference type="ChEBI" id="CHEBI:15378"/>
        <dbReference type="ChEBI" id="CHEBI:16113"/>
        <dbReference type="ChEBI" id="CHEBI:65250"/>
        <dbReference type="ChEBI" id="CHEBI:143135"/>
        <dbReference type="ChEBI" id="CHEBI:143140"/>
    </reaction>
    <physiologicalReaction direction="left-to-right" evidence="5">
        <dbReference type="Rhea" id="RHEA:59505"/>
    </physiologicalReaction>
</comment>
<comment type="subunit">
    <molecule>Indian hedgehog B protein N-product</molecule>
    <text evidence="3">Multimer.</text>
</comment>
<comment type="subunit">
    <text evidence="1 3">Interacts with BOC and CDON. Interacts with PTCH1 (By similarity). Interacts with glypican GPC3 (By similarity).</text>
</comment>
<comment type="subcellular location">
    <molecule>Indian hedgehog B protein N-product</molecule>
    <subcellularLocation>
        <location evidence="3">Cell membrane</location>
        <topology evidence="5">Lipid-anchor</topology>
    </subcellularLocation>
    <text evidence="4">The N-product remains associated with the cell surface.</text>
</comment>
<comment type="subcellular location">
    <molecule>Indian hedgehog B protein</molecule>
    <subcellularLocation>
        <location evidence="4">Endoplasmic reticulum membrane</location>
    </subcellularLocation>
    <subcellularLocation>
        <location evidence="4">Golgi apparatus membrane</location>
    </subcellularLocation>
    <subcellularLocation>
        <location evidence="3">Secreted</location>
    </subcellularLocation>
    <text evidence="4">Co-localizes with HHAT in the ER and Golgi membrane.</text>
</comment>
<comment type="tissue specificity">
    <text evidence="8">Expressed exclusively in the notochord.</text>
</comment>
<comment type="developmental stage">
    <text evidence="8">First detectable at the mid-gastrula stage. Disappears at the end of the somitogenesis.</text>
</comment>
<comment type="domain">
    <molecule>Indian hedgehog B protein N-product</molecule>
    <text evidence="3">Binds calcium and zinc ions; this stabilizes the protein fold and is essential for protein-protein interactions mediated by this domain.</text>
</comment>
<comment type="PTM">
    <molecule>Indian hedgehog B protein N-product</molecule>
    <text evidence="3">Cholesterylation is required for N-product targeting to lipid rafts and multimerization.</text>
</comment>
<comment type="PTM">
    <molecule>Indian hedgehog B protein</molecule>
    <text evidence="4 5">The C-terminal domain displays an autoproteolysis activity and a cholesterol transferase activity (By similarity). Both activities result in the cleavage of the full-length protein and covalent attachment of a cholesterol moiety to the C-terminal of the newly generated N-product (By similarity). The N-product is the active species in both local and long-range signaling, whereas the C-product is degraded in the endoplasmic reticulum (By similarity).</text>
</comment>
<comment type="PTM">
    <molecule>Indian hedgehog B protein N-product</molecule>
    <text evidence="3">N-palmitoylation by HHAT of N-product is required for indian hedgehog protein N-product multimerization and full activity.</text>
</comment>
<comment type="similarity">
    <text evidence="10">Belongs to the hedgehog family.</text>
</comment>
<accession>Q98862</accession>
<dbReference type="EC" id="3.1.-.-" evidence="5"/>
<dbReference type="EMBL" id="Y08426">
    <property type="protein sequence ID" value="CAA69702.1"/>
    <property type="molecule type" value="mRNA"/>
</dbReference>
<dbReference type="RefSeq" id="NP_571163.1">
    <property type="nucleotide sequence ID" value="NM_131088.1"/>
</dbReference>
<dbReference type="SMR" id="Q98862"/>
<dbReference type="FunCoup" id="Q98862">
    <property type="interactions" value="89"/>
</dbReference>
<dbReference type="STRING" id="7955.ENSDARP00000076199"/>
<dbReference type="PaxDb" id="7955-ENSDARP00000076199"/>
<dbReference type="GeneID" id="30299"/>
<dbReference type="KEGG" id="dre:30299"/>
<dbReference type="AGR" id="ZFIN:ZDB-GENE-980526-135"/>
<dbReference type="CTD" id="30299"/>
<dbReference type="ZFIN" id="ZDB-GENE-980526-135">
    <property type="gene designation" value="ihhb"/>
</dbReference>
<dbReference type="eggNOG" id="KOG3638">
    <property type="taxonomic scope" value="Eukaryota"/>
</dbReference>
<dbReference type="InParanoid" id="Q98862"/>
<dbReference type="OrthoDB" id="5212at2759"/>
<dbReference type="PhylomeDB" id="Q98862"/>
<dbReference type="SignaLink" id="Q98862"/>
<dbReference type="PRO" id="PR:Q98862"/>
<dbReference type="Proteomes" id="UP000000437">
    <property type="component" value="Chromosome 6"/>
</dbReference>
<dbReference type="GO" id="GO:0005789">
    <property type="term" value="C:endoplasmic reticulum membrane"/>
    <property type="evidence" value="ECO:0007669"/>
    <property type="project" value="UniProtKB-SubCell"/>
</dbReference>
<dbReference type="GO" id="GO:0005615">
    <property type="term" value="C:extracellular space"/>
    <property type="evidence" value="ECO:0000318"/>
    <property type="project" value="GO_Central"/>
</dbReference>
<dbReference type="GO" id="GO:0000139">
    <property type="term" value="C:Golgi membrane"/>
    <property type="evidence" value="ECO:0007669"/>
    <property type="project" value="UniProtKB-SubCell"/>
</dbReference>
<dbReference type="GO" id="GO:0005886">
    <property type="term" value="C:plasma membrane"/>
    <property type="evidence" value="ECO:0007669"/>
    <property type="project" value="UniProtKB-SubCell"/>
</dbReference>
<dbReference type="GO" id="GO:0005509">
    <property type="term" value="F:calcium ion binding"/>
    <property type="evidence" value="ECO:0000318"/>
    <property type="project" value="GO_Central"/>
</dbReference>
<dbReference type="GO" id="GO:0140853">
    <property type="term" value="F:cholesterol-protein transferase activity"/>
    <property type="evidence" value="ECO:0000250"/>
    <property type="project" value="UniProtKB"/>
</dbReference>
<dbReference type="GO" id="GO:0005113">
    <property type="term" value="F:patched binding"/>
    <property type="evidence" value="ECO:0000250"/>
    <property type="project" value="UniProtKB"/>
</dbReference>
<dbReference type="GO" id="GO:0008233">
    <property type="term" value="F:peptidase activity"/>
    <property type="evidence" value="ECO:0000250"/>
    <property type="project" value="UniProtKB"/>
</dbReference>
<dbReference type="GO" id="GO:0034189">
    <property type="term" value="F:very-low-density lipoprotein particle binding"/>
    <property type="evidence" value="ECO:0000250"/>
    <property type="project" value="UniProtKB"/>
</dbReference>
<dbReference type="GO" id="GO:0001708">
    <property type="term" value="P:cell fate specification"/>
    <property type="evidence" value="ECO:0000318"/>
    <property type="project" value="GO_Central"/>
</dbReference>
<dbReference type="GO" id="GO:0007267">
    <property type="term" value="P:cell-cell signaling"/>
    <property type="evidence" value="ECO:0007669"/>
    <property type="project" value="InterPro"/>
</dbReference>
<dbReference type="GO" id="GO:0016539">
    <property type="term" value="P:intein-mediated protein splicing"/>
    <property type="evidence" value="ECO:0007669"/>
    <property type="project" value="InterPro"/>
</dbReference>
<dbReference type="GO" id="GO:0048709">
    <property type="term" value="P:oligodendrocyte differentiation"/>
    <property type="evidence" value="ECO:0000315"/>
    <property type="project" value="ZFIN"/>
</dbReference>
<dbReference type="GO" id="GO:0045880">
    <property type="term" value="P:positive regulation of smoothened signaling pathway"/>
    <property type="evidence" value="ECO:0000250"/>
    <property type="project" value="UniProtKB"/>
</dbReference>
<dbReference type="GO" id="GO:0016540">
    <property type="term" value="P:protein autoprocessing"/>
    <property type="evidence" value="ECO:0007669"/>
    <property type="project" value="InterPro"/>
</dbReference>
<dbReference type="GO" id="GO:0010468">
    <property type="term" value="P:regulation of gene expression"/>
    <property type="evidence" value="ECO:0000318"/>
    <property type="project" value="GO_Central"/>
</dbReference>
<dbReference type="GO" id="GO:0070445">
    <property type="term" value="P:regulation of oligodendrocyte progenitor proliferation"/>
    <property type="evidence" value="ECO:0000315"/>
    <property type="project" value="ZFIN"/>
</dbReference>
<dbReference type="GO" id="GO:0097264">
    <property type="term" value="P:self proteolysis"/>
    <property type="evidence" value="ECO:0000250"/>
    <property type="project" value="UniProtKB"/>
</dbReference>
<dbReference type="GO" id="GO:0007224">
    <property type="term" value="P:smoothened signaling pathway"/>
    <property type="evidence" value="ECO:0000318"/>
    <property type="project" value="GO_Central"/>
</dbReference>
<dbReference type="GO" id="GO:0055002">
    <property type="term" value="P:striated muscle cell development"/>
    <property type="evidence" value="ECO:0000316"/>
    <property type="project" value="ZFIN"/>
</dbReference>
<dbReference type="CDD" id="cd00081">
    <property type="entry name" value="Hint"/>
    <property type="match status" value="1"/>
</dbReference>
<dbReference type="FunFam" id="2.170.16.10:FF:000001">
    <property type="entry name" value="Indian hedgehog"/>
    <property type="match status" value="1"/>
</dbReference>
<dbReference type="FunFam" id="3.30.1380.10:FF:000001">
    <property type="entry name" value="Indian hedgehog"/>
    <property type="match status" value="1"/>
</dbReference>
<dbReference type="Gene3D" id="3.30.1380.10">
    <property type="match status" value="1"/>
</dbReference>
<dbReference type="Gene3D" id="2.170.16.10">
    <property type="entry name" value="Hedgehog/Intein (Hint) domain"/>
    <property type="match status" value="1"/>
</dbReference>
<dbReference type="InterPro" id="IPR001657">
    <property type="entry name" value="Hedgehog"/>
</dbReference>
<dbReference type="InterPro" id="IPR001767">
    <property type="entry name" value="Hedgehog_Hint"/>
</dbReference>
<dbReference type="InterPro" id="IPR009045">
    <property type="entry name" value="Hedgehog_sig/DD-Pept_Zn-bd_sf"/>
</dbReference>
<dbReference type="InterPro" id="IPR050387">
    <property type="entry name" value="Hedgehog_Signaling"/>
</dbReference>
<dbReference type="InterPro" id="IPR000320">
    <property type="entry name" value="Hedgehog_signalling_dom"/>
</dbReference>
<dbReference type="InterPro" id="IPR003586">
    <property type="entry name" value="Hint_dom_C"/>
</dbReference>
<dbReference type="InterPro" id="IPR003587">
    <property type="entry name" value="Hint_dom_N"/>
</dbReference>
<dbReference type="InterPro" id="IPR036844">
    <property type="entry name" value="Hint_dom_sf"/>
</dbReference>
<dbReference type="InterPro" id="IPR006141">
    <property type="entry name" value="Intein_N"/>
</dbReference>
<dbReference type="PANTHER" id="PTHR11889">
    <property type="entry name" value="HEDGEHOG"/>
    <property type="match status" value="1"/>
</dbReference>
<dbReference type="PANTHER" id="PTHR11889:SF39">
    <property type="entry name" value="INDIAN HEDGEHOG PROTEIN"/>
    <property type="match status" value="1"/>
</dbReference>
<dbReference type="Pfam" id="PF01085">
    <property type="entry name" value="HH_signal"/>
    <property type="match status" value="1"/>
</dbReference>
<dbReference type="Pfam" id="PF01079">
    <property type="entry name" value="Hint"/>
    <property type="match status" value="1"/>
</dbReference>
<dbReference type="PIRSF" id="PIRSF009400">
    <property type="entry name" value="Peptidase_C46"/>
    <property type="match status" value="1"/>
</dbReference>
<dbReference type="PRINTS" id="PR00632">
    <property type="entry name" value="SONICHHOG"/>
</dbReference>
<dbReference type="SMART" id="SM00305">
    <property type="entry name" value="HintC"/>
    <property type="match status" value="1"/>
</dbReference>
<dbReference type="SMART" id="SM00306">
    <property type="entry name" value="HintN"/>
    <property type="match status" value="1"/>
</dbReference>
<dbReference type="SUPFAM" id="SSF55166">
    <property type="entry name" value="Hedgehog/DD-peptidase"/>
    <property type="match status" value="1"/>
</dbReference>
<dbReference type="SUPFAM" id="SSF51294">
    <property type="entry name" value="Hedgehog/intein (Hint) domain"/>
    <property type="match status" value="1"/>
</dbReference>
<dbReference type="PROSITE" id="PS50817">
    <property type="entry name" value="INTEIN_N_TER"/>
    <property type="match status" value="1"/>
</dbReference>
<evidence type="ECO:0000250" key="1">
    <source>
        <dbReference type="UniProtKB" id="P97812"/>
    </source>
</evidence>
<evidence type="ECO:0000250" key="2">
    <source>
        <dbReference type="UniProtKB" id="Q02936"/>
    </source>
</evidence>
<evidence type="ECO:0000250" key="3">
    <source>
        <dbReference type="UniProtKB" id="Q14623"/>
    </source>
</evidence>
<evidence type="ECO:0000250" key="4">
    <source>
        <dbReference type="UniProtKB" id="Q15465"/>
    </source>
</evidence>
<evidence type="ECO:0000250" key="5">
    <source>
        <dbReference type="UniProtKB" id="Q62226"/>
    </source>
</evidence>
<evidence type="ECO:0000250" key="6">
    <source>
        <dbReference type="UniProtKB" id="Q91612"/>
    </source>
</evidence>
<evidence type="ECO:0000255" key="7"/>
<evidence type="ECO:0000269" key="8">
    <source>
    </source>
</evidence>
<evidence type="ECO:0000303" key="9">
    <source>
    </source>
</evidence>
<evidence type="ECO:0000305" key="10"/>
<name>IHH_DANRE</name>
<keyword id="KW-0068">Autocatalytic cleavage</keyword>
<keyword id="KW-0106">Calcium</keyword>
<keyword id="KW-1003">Cell membrane</keyword>
<keyword id="KW-0217">Developmental protein</keyword>
<keyword id="KW-0256">Endoplasmic reticulum</keyword>
<keyword id="KW-0333">Golgi apparatus</keyword>
<keyword id="KW-0378">Hydrolase</keyword>
<keyword id="KW-0449">Lipoprotein</keyword>
<keyword id="KW-0472">Membrane</keyword>
<keyword id="KW-0479">Metal-binding</keyword>
<keyword id="KW-0564">Palmitate</keyword>
<keyword id="KW-0645">Protease</keyword>
<keyword id="KW-1185">Reference proteome</keyword>
<keyword id="KW-0964">Secreted</keyword>
<keyword id="KW-0732">Signal</keyword>
<keyword id="KW-0808">Transferase</keyword>
<keyword id="KW-0862">Zinc</keyword>
<proteinExistence type="evidence at transcript level"/>